<proteinExistence type="evidence at protein level"/>
<comment type="function">
    <text evidence="2 4">Non-catalytic component of the RNA exosome complex which has 3'-&gt;5' exoribonuclease activity and participates in a multitude of cellular RNA processing, maturation and degradation events. In vitro, is a processive phosphorolytic exonuclease and requires a single-stranded poly(A) tail on the substrate RNA for its activity. Can complement the growth defect of a yeast mutant lacking RRP41 exonuclease (PubMed:10930416). Required for normal development of female gametophytes (PubMed:18160042).</text>
</comment>
<comment type="subunit">
    <text evidence="2 3 4">Component of the RNA exosome complex (PubMed:10930416, PubMed:18160042). Interacts with RPP4 (PubMed:11809881).</text>
</comment>
<comment type="subcellular location">
    <subcellularLocation>
        <location evidence="1">Cytoplasm</location>
    </subcellularLocation>
    <subcellularLocation>
        <location evidence="1">Nucleus</location>
        <location evidence="1">Nucleolus</location>
    </subcellularLocation>
    <subcellularLocation>
        <location evidence="1">Nucleus</location>
    </subcellularLocation>
</comment>
<comment type="disruption phenotype">
    <text evidence="4">Aborted ovule development after the first mitosis.</text>
</comment>
<comment type="similarity">
    <text evidence="6">Belongs to the RNase PH family.</text>
</comment>
<sequence>MEYVNPEGLRLDGRRFNEMRQIVAEVGVVSKADGSAVFEMGNTKVIAAVYGPREIQNKSQQKKNDHAVVLCEYSMAQFSTGDRRRQKFDRRSTELSLVIRQTMEACILTELMPHSQIDIFLQVLQADGGTRSACINAATLALADAGIPMRDLAVSCSAGYLNSTPLLDLNYVEDSAGGADVTVGILPKLDKVSLLQMDAKLPMETFETVFALASEGCKAIAERIREVLQENTKQLEYRRAA</sequence>
<protein>
    <recommendedName>
        <fullName evidence="6">Exosome complex component RRP41 homolog</fullName>
    </recommendedName>
    <alternativeName>
        <fullName evidence="6">Ribosomal RNA-processing protein 41</fullName>
        <shortName evidence="5">AtRRP41</shortName>
        <shortName evidence="5">AtRrp41p</shortName>
    </alternativeName>
</protein>
<organism>
    <name type="scientific">Arabidopsis thaliana</name>
    <name type="common">Mouse-ear cress</name>
    <dbReference type="NCBI Taxonomy" id="3702"/>
    <lineage>
        <taxon>Eukaryota</taxon>
        <taxon>Viridiplantae</taxon>
        <taxon>Streptophyta</taxon>
        <taxon>Embryophyta</taxon>
        <taxon>Tracheophyta</taxon>
        <taxon>Spermatophyta</taxon>
        <taxon>Magnoliopsida</taxon>
        <taxon>eudicotyledons</taxon>
        <taxon>Gunneridae</taxon>
        <taxon>Pentapetalae</taxon>
        <taxon>rosids</taxon>
        <taxon>malvids</taxon>
        <taxon>Brassicales</taxon>
        <taxon>Brassicaceae</taxon>
        <taxon>Camelineae</taxon>
        <taxon>Arabidopsis</taxon>
    </lineage>
</organism>
<reference key="1">
    <citation type="journal article" date="2000" name="J. Biol. Chem.">
        <title>Poly(A) tail-dependent exonuclease AtRrp41p from Arabidopsis thaliana rescues 5.8 S rRNA processing and mRNA decay defects of the yeast ski6 mutant and is found in an exosome-sized complex in plant and yeast cells.</title>
        <authorList>
            <person name="Chekanova J.A."/>
            <person name="Shaw R.J."/>
            <person name="Wills M.A."/>
            <person name="Belostotsky D.A."/>
        </authorList>
    </citation>
    <scope>NUCLEOTIDE SEQUENCE [MRNA]</scope>
    <scope>FUNCTION</scope>
    <scope>SUBUNIT</scope>
    <source>
        <strain>cv. Columbia</strain>
        <tissue evidence="8">Immature flower</tissue>
    </source>
</reference>
<reference key="2">
    <citation type="journal article" date="2000" name="Nature">
        <title>Sequence and analysis of chromosome 3 of the plant Arabidopsis thaliana.</title>
        <authorList>
            <person name="Salanoubat M."/>
            <person name="Lemcke K."/>
            <person name="Rieger M."/>
            <person name="Ansorge W."/>
            <person name="Unseld M."/>
            <person name="Fartmann B."/>
            <person name="Valle G."/>
            <person name="Bloecker H."/>
            <person name="Perez-Alonso M."/>
            <person name="Obermaier B."/>
            <person name="Delseny M."/>
            <person name="Boutry M."/>
            <person name="Grivell L.A."/>
            <person name="Mache R."/>
            <person name="Puigdomenech P."/>
            <person name="De Simone V."/>
            <person name="Choisne N."/>
            <person name="Artiguenave F."/>
            <person name="Robert C."/>
            <person name="Brottier P."/>
            <person name="Wincker P."/>
            <person name="Cattolico L."/>
            <person name="Weissenbach J."/>
            <person name="Saurin W."/>
            <person name="Quetier F."/>
            <person name="Schaefer M."/>
            <person name="Mueller-Auer S."/>
            <person name="Gabel C."/>
            <person name="Fuchs M."/>
            <person name="Benes V."/>
            <person name="Wurmbach E."/>
            <person name="Drzonek H."/>
            <person name="Erfle H."/>
            <person name="Jordan N."/>
            <person name="Bangert S."/>
            <person name="Wiedelmann R."/>
            <person name="Kranz H."/>
            <person name="Voss H."/>
            <person name="Holland R."/>
            <person name="Brandt P."/>
            <person name="Nyakatura G."/>
            <person name="Vezzi A."/>
            <person name="D'Angelo M."/>
            <person name="Pallavicini A."/>
            <person name="Toppo S."/>
            <person name="Simionati B."/>
            <person name="Conrad A."/>
            <person name="Hornischer K."/>
            <person name="Kauer G."/>
            <person name="Loehnert T.-H."/>
            <person name="Nordsiek G."/>
            <person name="Reichelt J."/>
            <person name="Scharfe M."/>
            <person name="Schoen O."/>
            <person name="Bargues M."/>
            <person name="Terol J."/>
            <person name="Climent J."/>
            <person name="Navarro P."/>
            <person name="Collado C."/>
            <person name="Perez-Perez A."/>
            <person name="Ottenwaelder B."/>
            <person name="Duchemin D."/>
            <person name="Cooke R."/>
            <person name="Laudie M."/>
            <person name="Berger-Llauro C."/>
            <person name="Purnelle B."/>
            <person name="Masuy D."/>
            <person name="de Haan M."/>
            <person name="Maarse A.C."/>
            <person name="Alcaraz J.-P."/>
            <person name="Cottet A."/>
            <person name="Casacuberta E."/>
            <person name="Monfort A."/>
            <person name="Argiriou A."/>
            <person name="Flores M."/>
            <person name="Liguori R."/>
            <person name="Vitale D."/>
            <person name="Mannhaupt G."/>
            <person name="Haase D."/>
            <person name="Schoof H."/>
            <person name="Rudd S."/>
            <person name="Zaccaria P."/>
            <person name="Mewes H.-W."/>
            <person name="Mayer K.F.X."/>
            <person name="Kaul S."/>
            <person name="Town C.D."/>
            <person name="Koo H.L."/>
            <person name="Tallon L.J."/>
            <person name="Jenkins J."/>
            <person name="Rooney T."/>
            <person name="Rizzo M."/>
            <person name="Walts A."/>
            <person name="Utterback T."/>
            <person name="Fujii C.Y."/>
            <person name="Shea T.P."/>
            <person name="Creasy T.H."/>
            <person name="Haas B."/>
            <person name="Maiti R."/>
            <person name="Wu D."/>
            <person name="Peterson J."/>
            <person name="Van Aken S."/>
            <person name="Pai G."/>
            <person name="Militscher J."/>
            <person name="Sellers P."/>
            <person name="Gill J.E."/>
            <person name="Feldblyum T.V."/>
            <person name="Preuss D."/>
            <person name="Lin X."/>
            <person name="Nierman W.C."/>
            <person name="Salzberg S.L."/>
            <person name="White O."/>
            <person name="Venter J.C."/>
            <person name="Fraser C.M."/>
            <person name="Kaneko T."/>
            <person name="Nakamura Y."/>
            <person name="Sato S."/>
            <person name="Kato T."/>
            <person name="Asamizu E."/>
            <person name="Sasamoto S."/>
            <person name="Kimura T."/>
            <person name="Idesawa K."/>
            <person name="Kawashima K."/>
            <person name="Kishida Y."/>
            <person name="Kiyokawa C."/>
            <person name="Kohara M."/>
            <person name="Matsumoto M."/>
            <person name="Matsuno A."/>
            <person name="Muraki A."/>
            <person name="Nakayama S."/>
            <person name="Nakazaki N."/>
            <person name="Shinpo S."/>
            <person name="Takeuchi C."/>
            <person name="Wada T."/>
            <person name="Watanabe A."/>
            <person name="Yamada M."/>
            <person name="Yasuda M."/>
            <person name="Tabata S."/>
        </authorList>
    </citation>
    <scope>NUCLEOTIDE SEQUENCE [LARGE SCALE GENOMIC DNA]</scope>
    <source>
        <strain>cv. Columbia</strain>
    </source>
</reference>
<reference key="3">
    <citation type="journal article" date="2017" name="Plant J.">
        <title>Araport11: a complete reannotation of the Arabidopsis thaliana reference genome.</title>
        <authorList>
            <person name="Cheng C.Y."/>
            <person name="Krishnakumar V."/>
            <person name="Chan A.P."/>
            <person name="Thibaud-Nissen F."/>
            <person name="Schobel S."/>
            <person name="Town C.D."/>
        </authorList>
    </citation>
    <scope>GENOME REANNOTATION</scope>
    <source>
        <strain>cv. Columbia</strain>
    </source>
</reference>
<reference key="4">
    <citation type="journal article" date="2002" name="Science">
        <title>Functional annotation of a full-length Arabidopsis cDNA collection.</title>
        <authorList>
            <person name="Seki M."/>
            <person name="Narusaka M."/>
            <person name="Kamiya A."/>
            <person name="Ishida J."/>
            <person name="Satou M."/>
            <person name="Sakurai T."/>
            <person name="Nakajima M."/>
            <person name="Enju A."/>
            <person name="Akiyama K."/>
            <person name="Oono Y."/>
            <person name="Muramatsu M."/>
            <person name="Hayashizaki Y."/>
            <person name="Kawai J."/>
            <person name="Carninci P."/>
            <person name="Itoh M."/>
            <person name="Ishii Y."/>
            <person name="Arakawa T."/>
            <person name="Shibata K."/>
            <person name="Shinagawa A."/>
            <person name="Shinozaki K."/>
        </authorList>
    </citation>
    <scope>NUCLEOTIDE SEQUENCE [LARGE SCALE MRNA]</scope>
    <source>
        <strain>cv. Columbia</strain>
    </source>
</reference>
<reference key="5">
    <citation type="journal article" date="2003" name="Science">
        <title>Empirical analysis of transcriptional activity in the Arabidopsis genome.</title>
        <authorList>
            <person name="Yamada K."/>
            <person name="Lim J."/>
            <person name="Dale J.M."/>
            <person name="Chen H."/>
            <person name="Shinn P."/>
            <person name="Palm C.J."/>
            <person name="Southwick A.M."/>
            <person name="Wu H.C."/>
            <person name="Kim C.J."/>
            <person name="Nguyen M."/>
            <person name="Pham P.K."/>
            <person name="Cheuk R.F."/>
            <person name="Karlin-Newmann G."/>
            <person name="Liu S.X."/>
            <person name="Lam B."/>
            <person name="Sakano H."/>
            <person name="Wu T."/>
            <person name="Yu G."/>
            <person name="Miranda M."/>
            <person name="Quach H.L."/>
            <person name="Tripp M."/>
            <person name="Chang C.H."/>
            <person name="Lee J.M."/>
            <person name="Toriumi M.J."/>
            <person name="Chan M.M."/>
            <person name="Tang C.C."/>
            <person name="Onodera C.S."/>
            <person name="Deng J.M."/>
            <person name="Akiyama K."/>
            <person name="Ansari Y."/>
            <person name="Arakawa T."/>
            <person name="Banh J."/>
            <person name="Banno F."/>
            <person name="Bowser L."/>
            <person name="Brooks S.Y."/>
            <person name="Carninci P."/>
            <person name="Chao Q."/>
            <person name="Choy N."/>
            <person name="Enju A."/>
            <person name="Goldsmith A.D."/>
            <person name="Gurjal M."/>
            <person name="Hansen N.F."/>
            <person name="Hayashizaki Y."/>
            <person name="Johnson-Hopson C."/>
            <person name="Hsuan V.W."/>
            <person name="Iida K."/>
            <person name="Karnes M."/>
            <person name="Khan S."/>
            <person name="Koesema E."/>
            <person name="Ishida J."/>
            <person name="Jiang P.X."/>
            <person name="Jones T."/>
            <person name="Kawai J."/>
            <person name="Kamiya A."/>
            <person name="Meyers C."/>
            <person name="Nakajima M."/>
            <person name="Narusaka M."/>
            <person name="Seki M."/>
            <person name="Sakurai T."/>
            <person name="Satou M."/>
            <person name="Tamse R."/>
            <person name="Vaysberg M."/>
            <person name="Wallender E.K."/>
            <person name="Wong C."/>
            <person name="Yamamura Y."/>
            <person name="Yuan S."/>
            <person name="Shinozaki K."/>
            <person name="Davis R.W."/>
            <person name="Theologis A."/>
            <person name="Ecker J.R."/>
        </authorList>
    </citation>
    <scope>NUCLEOTIDE SEQUENCE [LARGE SCALE MRNA]</scope>
    <source>
        <strain>cv. Columbia</strain>
    </source>
</reference>
<reference key="6">
    <citation type="journal article" date="2002" name="Nucleic Acids Res.">
        <title>Arabidopsis thaliana exosome subunit AtRrp4p is a hydrolytic 3'--&gt;5' exonuclease containing S1 and KH RNA-binding domains.</title>
        <authorList>
            <person name="Chekanova J.A."/>
            <person name="Dutko J.A."/>
            <person name="Mian I.S."/>
            <person name="Belostotsky D.A."/>
        </authorList>
    </citation>
    <scope>INTERACTION WITH RPP4</scope>
</reference>
<reference key="7">
    <citation type="journal article" date="2007" name="Cell">
        <title>Genome-wide high-resolution mapping of exosome substrates reveals hidden features in the Arabidopsis transcriptome.</title>
        <authorList>
            <person name="Chekanova J.A."/>
            <person name="Gregory B.D."/>
            <person name="Reverdatto S.V."/>
            <person name="Chen H."/>
            <person name="Kumar R."/>
            <person name="Hooker T."/>
            <person name="Yazaki J."/>
            <person name="Li P."/>
            <person name="Skiba N."/>
            <person name="Peng Q."/>
            <person name="Alonso J."/>
            <person name="Brukhin V."/>
            <person name="Grossniklaus U."/>
            <person name="Ecker J.R."/>
            <person name="Belostotsky D.A."/>
        </authorList>
    </citation>
    <scope>SUBUNIT</scope>
    <scope>DISRUPTION PHENOTYPE</scope>
</reference>
<reference key="8">
    <citation type="journal article" date="2012" name="Mol. Cell. Proteomics">
        <title>Comparative large-scale characterisation of plant vs. mammal proteins reveals similar and idiosyncratic N-alpha acetylation features.</title>
        <authorList>
            <person name="Bienvenut W.V."/>
            <person name="Sumpton D."/>
            <person name="Martinez A."/>
            <person name="Lilla S."/>
            <person name="Espagne C."/>
            <person name="Meinnel T."/>
            <person name="Giglione C."/>
        </authorList>
    </citation>
    <scope>ACETYLATION [LARGE SCALE ANALYSIS] AT MET-1</scope>
    <scope>IDENTIFICATION BY MASS SPECTROMETRY [LARGE SCALE ANALYSIS]</scope>
</reference>
<feature type="chain" id="PRO_0000435318" description="Exosome complex component RRP41 homolog">
    <location>
        <begin position="1"/>
        <end position="241"/>
    </location>
</feature>
<feature type="modified residue" description="N-acetylmethionine" evidence="10">
    <location>
        <position position="1"/>
    </location>
</feature>
<dbReference type="EMBL" id="AF191741">
    <property type="protein sequence ID" value="AAF04590.1"/>
    <property type="molecule type" value="mRNA"/>
</dbReference>
<dbReference type="EMBL" id="AL132959">
    <property type="protein sequence ID" value="CAB71092.1"/>
    <property type="molecule type" value="Genomic_DNA"/>
</dbReference>
<dbReference type="EMBL" id="CP002686">
    <property type="protein sequence ID" value="AEE80232.1"/>
    <property type="molecule type" value="Genomic_DNA"/>
</dbReference>
<dbReference type="EMBL" id="CP002686">
    <property type="protein sequence ID" value="AEE80233.1"/>
    <property type="molecule type" value="Genomic_DNA"/>
</dbReference>
<dbReference type="EMBL" id="AK118846">
    <property type="protein sequence ID" value="BAC43435.1"/>
    <property type="molecule type" value="mRNA"/>
</dbReference>
<dbReference type="EMBL" id="BT005485">
    <property type="protein sequence ID" value="AAO63905.1"/>
    <property type="molecule type" value="mRNA"/>
</dbReference>
<dbReference type="PIR" id="T47954">
    <property type="entry name" value="T47954"/>
</dbReference>
<dbReference type="RefSeq" id="NP_001118878.1">
    <property type="nucleotide sequence ID" value="NM_001125406.1"/>
</dbReference>
<dbReference type="RefSeq" id="NP_191721.1">
    <property type="nucleotide sequence ID" value="NM_116027.5"/>
</dbReference>
<dbReference type="SMR" id="Q9SP08"/>
<dbReference type="FunCoup" id="Q9SP08">
    <property type="interactions" value="3463"/>
</dbReference>
<dbReference type="IntAct" id="Q9SP08">
    <property type="interactions" value="8"/>
</dbReference>
<dbReference type="STRING" id="3702.Q9SP08"/>
<dbReference type="iPTMnet" id="Q9SP08"/>
<dbReference type="PaxDb" id="3702-AT3G61620.2"/>
<dbReference type="ProteomicsDB" id="228255"/>
<dbReference type="DNASU" id="825335"/>
<dbReference type="EnsemblPlants" id="AT3G61620.1">
    <property type="protein sequence ID" value="AT3G61620.1"/>
    <property type="gene ID" value="AT3G61620"/>
</dbReference>
<dbReference type="EnsemblPlants" id="AT3G61620.2">
    <property type="protein sequence ID" value="AT3G61620.2"/>
    <property type="gene ID" value="AT3G61620"/>
</dbReference>
<dbReference type="GeneID" id="825335"/>
<dbReference type="Gramene" id="AT3G61620.1">
    <property type="protein sequence ID" value="AT3G61620.1"/>
    <property type="gene ID" value="AT3G61620"/>
</dbReference>
<dbReference type="Gramene" id="AT3G61620.2">
    <property type="protein sequence ID" value="AT3G61620.2"/>
    <property type="gene ID" value="AT3G61620"/>
</dbReference>
<dbReference type="KEGG" id="ath:AT3G61620"/>
<dbReference type="Araport" id="AT3G61620"/>
<dbReference type="TAIR" id="AT3G61620">
    <property type="gene designation" value="RRP41"/>
</dbReference>
<dbReference type="eggNOG" id="KOG1068">
    <property type="taxonomic scope" value="Eukaryota"/>
</dbReference>
<dbReference type="HOGENOM" id="CLU_063514_0_0_1"/>
<dbReference type="InParanoid" id="Q9SP08"/>
<dbReference type="OMA" id="RYNMAPF"/>
<dbReference type="OrthoDB" id="1039255at2759"/>
<dbReference type="PhylomeDB" id="Q9SP08"/>
<dbReference type="CD-CODE" id="4299E36E">
    <property type="entry name" value="Nucleolus"/>
</dbReference>
<dbReference type="PRO" id="PR:Q9SP08"/>
<dbReference type="Proteomes" id="UP000006548">
    <property type="component" value="Chromosome 3"/>
</dbReference>
<dbReference type="ExpressionAtlas" id="Q9SP08">
    <property type="expression patterns" value="baseline and differential"/>
</dbReference>
<dbReference type="GO" id="GO:0005737">
    <property type="term" value="C:cytoplasm"/>
    <property type="evidence" value="ECO:0007669"/>
    <property type="project" value="UniProtKB-SubCell"/>
</dbReference>
<dbReference type="GO" id="GO:0000178">
    <property type="term" value="C:exosome (RNase complex)"/>
    <property type="evidence" value="ECO:0007669"/>
    <property type="project" value="UniProtKB-KW"/>
</dbReference>
<dbReference type="GO" id="GO:0005730">
    <property type="term" value="C:nucleolus"/>
    <property type="evidence" value="ECO:0007669"/>
    <property type="project" value="UniProtKB-SubCell"/>
</dbReference>
<dbReference type="GO" id="GO:0003723">
    <property type="term" value="F:RNA binding"/>
    <property type="evidence" value="ECO:0007669"/>
    <property type="project" value="UniProtKB-KW"/>
</dbReference>
<dbReference type="GO" id="GO:0006364">
    <property type="term" value="P:rRNA processing"/>
    <property type="evidence" value="ECO:0007669"/>
    <property type="project" value="UniProtKB-KW"/>
</dbReference>
<dbReference type="CDD" id="cd11370">
    <property type="entry name" value="RNase_PH_RRP41"/>
    <property type="match status" value="1"/>
</dbReference>
<dbReference type="FunFam" id="3.30.230.70:FF:000004">
    <property type="entry name" value="Exosome complex component Rrp41"/>
    <property type="match status" value="1"/>
</dbReference>
<dbReference type="Gene3D" id="3.30.230.70">
    <property type="entry name" value="GHMP Kinase, N-terminal domain"/>
    <property type="match status" value="1"/>
</dbReference>
<dbReference type="InterPro" id="IPR001247">
    <property type="entry name" value="ExoRNase_PH_dom1"/>
</dbReference>
<dbReference type="InterPro" id="IPR015847">
    <property type="entry name" value="ExoRNase_PH_dom2"/>
</dbReference>
<dbReference type="InterPro" id="IPR036345">
    <property type="entry name" value="ExoRNase_PH_dom2_sf"/>
</dbReference>
<dbReference type="InterPro" id="IPR027408">
    <property type="entry name" value="PNPase/RNase_PH_dom_sf"/>
</dbReference>
<dbReference type="InterPro" id="IPR020568">
    <property type="entry name" value="Ribosomal_Su5_D2-typ_SF"/>
</dbReference>
<dbReference type="InterPro" id="IPR050080">
    <property type="entry name" value="RNase_PH"/>
</dbReference>
<dbReference type="PANTHER" id="PTHR11953">
    <property type="entry name" value="EXOSOME COMPLEX COMPONENT"/>
    <property type="match status" value="1"/>
</dbReference>
<dbReference type="PANTHER" id="PTHR11953:SF0">
    <property type="entry name" value="EXOSOME COMPLEX COMPONENT RRP41"/>
    <property type="match status" value="1"/>
</dbReference>
<dbReference type="Pfam" id="PF01138">
    <property type="entry name" value="RNase_PH"/>
    <property type="match status" value="1"/>
</dbReference>
<dbReference type="Pfam" id="PF03725">
    <property type="entry name" value="RNase_PH_C"/>
    <property type="match status" value="1"/>
</dbReference>
<dbReference type="SUPFAM" id="SSF55666">
    <property type="entry name" value="Ribonuclease PH domain 2-like"/>
    <property type="match status" value="1"/>
</dbReference>
<dbReference type="SUPFAM" id="SSF54211">
    <property type="entry name" value="Ribosomal protein S5 domain 2-like"/>
    <property type="match status" value="1"/>
</dbReference>
<accession>Q9SP08</accession>
<gene>
    <name evidence="6" type="primary">RRP41</name>
    <name evidence="7" type="ordered locus">At3g61620</name>
    <name evidence="9" type="ORF">F15G16.10</name>
</gene>
<name>RRP41_ARATH</name>
<keyword id="KW-0007">Acetylation</keyword>
<keyword id="KW-0963">Cytoplasm</keyword>
<keyword id="KW-0271">Exosome</keyword>
<keyword id="KW-0539">Nucleus</keyword>
<keyword id="KW-1185">Reference proteome</keyword>
<keyword id="KW-0694">RNA-binding</keyword>
<keyword id="KW-0698">rRNA processing</keyword>
<evidence type="ECO:0000250" key="1">
    <source>
        <dbReference type="UniProtKB" id="Q9NPD3"/>
    </source>
</evidence>
<evidence type="ECO:0000269" key="2">
    <source>
    </source>
</evidence>
<evidence type="ECO:0000269" key="3">
    <source>
    </source>
</evidence>
<evidence type="ECO:0000269" key="4">
    <source>
    </source>
</evidence>
<evidence type="ECO:0000303" key="5">
    <source>
    </source>
</evidence>
<evidence type="ECO:0000305" key="6"/>
<evidence type="ECO:0000312" key="7">
    <source>
        <dbReference type="Araport" id="AT3G61620"/>
    </source>
</evidence>
<evidence type="ECO:0000312" key="8">
    <source>
        <dbReference type="EMBL" id="AAF04590.1"/>
    </source>
</evidence>
<evidence type="ECO:0000312" key="9">
    <source>
        <dbReference type="EMBL" id="CAB71092.1"/>
    </source>
</evidence>
<evidence type="ECO:0007744" key="10">
    <source>
    </source>
</evidence>